<accession>Q17ZC6</accession>
<keyword id="KW-0687">Ribonucleoprotein</keyword>
<keyword id="KW-0689">Ribosomal protein</keyword>
<keyword id="KW-0694">RNA-binding</keyword>
<keyword id="KW-0699">rRNA-binding</keyword>
<keyword id="KW-0820">tRNA-binding</keyword>
<gene>
    <name evidence="1" type="primary">rplE</name>
    <name type="ordered locus">Hac_0148</name>
</gene>
<dbReference type="EMBL" id="AM260522">
    <property type="protein sequence ID" value="CAJ99000.1"/>
    <property type="molecule type" value="Genomic_DNA"/>
</dbReference>
<dbReference type="RefSeq" id="WP_011577118.1">
    <property type="nucleotide sequence ID" value="NC_008229.1"/>
</dbReference>
<dbReference type="SMR" id="Q17ZC6"/>
<dbReference type="STRING" id="382638.Hac_0148"/>
<dbReference type="GeneID" id="31757677"/>
<dbReference type="KEGG" id="hac:Hac_0148"/>
<dbReference type="eggNOG" id="COG0094">
    <property type="taxonomic scope" value="Bacteria"/>
</dbReference>
<dbReference type="HOGENOM" id="CLU_061015_2_1_7"/>
<dbReference type="OrthoDB" id="9806626at2"/>
<dbReference type="BioCyc" id="HACI382638:HAC_RS00640-MONOMER"/>
<dbReference type="Proteomes" id="UP000000775">
    <property type="component" value="Chromosome"/>
</dbReference>
<dbReference type="GO" id="GO:1990904">
    <property type="term" value="C:ribonucleoprotein complex"/>
    <property type="evidence" value="ECO:0007669"/>
    <property type="project" value="UniProtKB-KW"/>
</dbReference>
<dbReference type="GO" id="GO:0005840">
    <property type="term" value="C:ribosome"/>
    <property type="evidence" value="ECO:0007669"/>
    <property type="project" value="UniProtKB-KW"/>
</dbReference>
<dbReference type="GO" id="GO:0019843">
    <property type="term" value="F:rRNA binding"/>
    <property type="evidence" value="ECO:0007669"/>
    <property type="project" value="UniProtKB-UniRule"/>
</dbReference>
<dbReference type="GO" id="GO:0003735">
    <property type="term" value="F:structural constituent of ribosome"/>
    <property type="evidence" value="ECO:0007669"/>
    <property type="project" value="InterPro"/>
</dbReference>
<dbReference type="GO" id="GO:0000049">
    <property type="term" value="F:tRNA binding"/>
    <property type="evidence" value="ECO:0007669"/>
    <property type="project" value="UniProtKB-UniRule"/>
</dbReference>
<dbReference type="GO" id="GO:0006412">
    <property type="term" value="P:translation"/>
    <property type="evidence" value="ECO:0007669"/>
    <property type="project" value="UniProtKB-UniRule"/>
</dbReference>
<dbReference type="FunFam" id="3.30.1440.10:FF:000001">
    <property type="entry name" value="50S ribosomal protein L5"/>
    <property type="match status" value="1"/>
</dbReference>
<dbReference type="Gene3D" id="3.30.1440.10">
    <property type="match status" value="1"/>
</dbReference>
<dbReference type="HAMAP" id="MF_01333_B">
    <property type="entry name" value="Ribosomal_uL5_B"/>
    <property type="match status" value="1"/>
</dbReference>
<dbReference type="InterPro" id="IPR002132">
    <property type="entry name" value="Ribosomal_uL5"/>
</dbReference>
<dbReference type="InterPro" id="IPR020930">
    <property type="entry name" value="Ribosomal_uL5_bac-type"/>
</dbReference>
<dbReference type="InterPro" id="IPR031309">
    <property type="entry name" value="Ribosomal_uL5_C"/>
</dbReference>
<dbReference type="InterPro" id="IPR020929">
    <property type="entry name" value="Ribosomal_uL5_CS"/>
</dbReference>
<dbReference type="InterPro" id="IPR022803">
    <property type="entry name" value="Ribosomal_uL5_dom_sf"/>
</dbReference>
<dbReference type="InterPro" id="IPR031310">
    <property type="entry name" value="Ribosomal_uL5_N"/>
</dbReference>
<dbReference type="NCBIfam" id="NF000585">
    <property type="entry name" value="PRK00010.1"/>
    <property type="match status" value="1"/>
</dbReference>
<dbReference type="PANTHER" id="PTHR11994">
    <property type="entry name" value="60S RIBOSOMAL PROTEIN L11-RELATED"/>
    <property type="match status" value="1"/>
</dbReference>
<dbReference type="Pfam" id="PF00281">
    <property type="entry name" value="Ribosomal_L5"/>
    <property type="match status" value="1"/>
</dbReference>
<dbReference type="Pfam" id="PF00673">
    <property type="entry name" value="Ribosomal_L5_C"/>
    <property type="match status" value="1"/>
</dbReference>
<dbReference type="PIRSF" id="PIRSF002161">
    <property type="entry name" value="Ribosomal_L5"/>
    <property type="match status" value="1"/>
</dbReference>
<dbReference type="SUPFAM" id="SSF55282">
    <property type="entry name" value="RL5-like"/>
    <property type="match status" value="1"/>
</dbReference>
<dbReference type="PROSITE" id="PS00358">
    <property type="entry name" value="RIBOSOMAL_L5"/>
    <property type="match status" value="1"/>
</dbReference>
<reference key="1">
    <citation type="journal article" date="2006" name="PLoS Genet.">
        <title>Who ate whom? Adaptive Helicobacter genomic changes that accompanied a host jump from early humans to large felines.</title>
        <authorList>
            <person name="Eppinger M."/>
            <person name="Baar C."/>
            <person name="Linz B."/>
            <person name="Raddatz G."/>
            <person name="Lanz C."/>
            <person name="Keller H."/>
            <person name="Morelli G."/>
            <person name="Gressmann H."/>
            <person name="Achtman M."/>
            <person name="Schuster S.C."/>
        </authorList>
    </citation>
    <scope>NUCLEOTIDE SEQUENCE [LARGE SCALE GENOMIC DNA]</scope>
    <source>
        <strain>Sheeba</strain>
    </source>
</reference>
<organism>
    <name type="scientific">Helicobacter acinonychis (strain Sheeba)</name>
    <dbReference type="NCBI Taxonomy" id="382638"/>
    <lineage>
        <taxon>Bacteria</taxon>
        <taxon>Pseudomonadati</taxon>
        <taxon>Campylobacterota</taxon>
        <taxon>Epsilonproteobacteria</taxon>
        <taxon>Campylobacterales</taxon>
        <taxon>Helicobacteraceae</taxon>
        <taxon>Helicobacter</taxon>
    </lineage>
</organism>
<proteinExistence type="inferred from homology"/>
<sequence>MFGLKQFYQNEVKVKLAQELDIKNPMLLPKLEKIVISVGAGAHAKDMKIMQNIAQTISLIAGQKAVITKAKKSVAGFKIREGMAVGAKVTLRNKRMYNFLEKLIVISLPRVKDFRGISRNGFDGRGNYTFGINEQLIFPEVVYDDIMVSHGMNITMVTSTDNDKEAFKLLELLGLPFAKVR</sequence>
<protein>
    <recommendedName>
        <fullName evidence="1">Large ribosomal subunit protein uL5</fullName>
    </recommendedName>
    <alternativeName>
        <fullName evidence="2">50S ribosomal protein L5</fullName>
    </alternativeName>
</protein>
<name>RL5_HELAH</name>
<evidence type="ECO:0000255" key="1">
    <source>
        <dbReference type="HAMAP-Rule" id="MF_01333"/>
    </source>
</evidence>
<evidence type="ECO:0000305" key="2"/>
<comment type="function">
    <text evidence="1">This is one of the proteins that bind and probably mediate the attachment of the 5S RNA into the large ribosomal subunit, where it forms part of the central protuberance. In the 70S ribosome it contacts protein S13 of the 30S subunit (bridge B1b), connecting the 2 subunits; this bridge is implicated in subunit movement. Contacts the P site tRNA; the 5S rRNA and some of its associated proteins might help stabilize positioning of ribosome-bound tRNAs.</text>
</comment>
<comment type="subunit">
    <text evidence="1">Part of the 50S ribosomal subunit; part of the 5S rRNA/L5/L18/L25 subcomplex. Contacts the 5S rRNA and the P site tRNA. Forms a bridge to the 30S subunit in the 70S ribosome.</text>
</comment>
<comment type="similarity">
    <text evidence="1">Belongs to the universal ribosomal protein uL5 family.</text>
</comment>
<feature type="chain" id="PRO_1000052747" description="Large ribosomal subunit protein uL5">
    <location>
        <begin position="1"/>
        <end position="181"/>
    </location>
</feature>